<feature type="chain" id="PRO_0000122983" description="dTTP/UTP pyrophosphatase">
    <location>
        <begin position="1"/>
        <end position="197"/>
    </location>
</feature>
<feature type="active site" description="Proton acceptor" evidence="1">
    <location>
        <position position="70"/>
    </location>
</feature>
<feature type="site" description="Important for substrate specificity" evidence="1">
    <location>
        <position position="12"/>
    </location>
</feature>
<feature type="site" description="Important for substrate specificity" evidence="1">
    <location>
        <position position="71"/>
    </location>
</feature>
<feature type="site" description="Important for substrate specificity" evidence="1">
    <location>
        <position position="153"/>
    </location>
</feature>
<organism>
    <name type="scientific">Escherichia coli O157:H7</name>
    <dbReference type="NCBI Taxonomy" id="83334"/>
    <lineage>
        <taxon>Bacteria</taxon>
        <taxon>Pseudomonadati</taxon>
        <taxon>Pseudomonadota</taxon>
        <taxon>Gammaproteobacteria</taxon>
        <taxon>Enterobacterales</taxon>
        <taxon>Enterobacteriaceae</taxon>
        <taxon>Escherichia</taxon>
    </lineage>
</organism>
<dbReference type="EC" id="3.6.1.9" evidence="1"/>
<dbReference type="EMBL" id="AE005174">
    <property type="protein sequence ID" value="AAG58375.1"/>
    <property type="molecule type" value="Genomic_DNA"/>
</dbReference>
<dbReference type="EMBL" id="BA000007">
    <property type="protein sequence ID" value="BAB37543.1"/>
    <property type="molecule type" value="Genomic_DNA"/>
</dbReference>
<dbReference type="PIR" id="C85989">
    <property type="entry name" value="C85989"/>
</dbReference>
<dbReference type="PIR" id="H91143">
    <property type="entry name" value="H91143"/>
</dbReference>
<dbReference type="RefSeq" id="NP_312147.1">
    <property type="nucleotide sequence ID" value="NC_002695.1"/>
</dbReference>
<dbReference type="RefSeq" id="WP_000203107.1">
    <property type="nucleotide sequence ID" value="NZ_VOAI01000014.1"/>
</dbReference>
<dbReference type="SMR" id="P58629"/>
<dbReference type="STRING" id="155864.Z4606"/>
<dbReference type="GeneID" id="916033"/>
<dbReference type="KEGG" id="ece:Z4606"/>
<dbReference type="KEGG" id="ecs:ECs_4120"/>
<dbReference type="PATRIC" id="fig|386585.9.peg.4301"/>
<dbReference type="eggNOG" id="COG0424">
    <property type="taxonomic scope" value="Bacteria"/>
</dbReference>
<dbReference type="HOGENOM" id="CLU_040416_2_1_6"/>
<dbReference type="OMA" id="VIGCDSV"/>
<dbReference type="Proteomes" id="UP000000558">
    <property type="component" value="Chromosome"/>
</dbReference>
<dbReference type="Proteomes" id="UP000002519">
    <property type="component" value="Chromosome"/>
</dbReference>
<dbReference type="GO" id="GO:0005737">
    <property type="term" value="C:cytoplasm"/>
    <property type="evidence" value="ECO:0007669"/>
    <property type="project" value="UniProtKB-SubCell"/>
</dbReference>
<dbReference type="GO" id="GO:0036218">
    <property type="term" value="F:dTTP diphosphatase activity"/>
    <property type="evidence" value="ECO:0007669"/>
    <property type="project" value="RHEA"/>
</dbReference>
<dbReference type="GO" id="GO:0036221">
    <property type="term" value="F:UTP diphosphatase activity"/>
    <property type="evidence" value="ECO:0007669"/>
    <property type="project" value="RHEA"/>
</dbReference>
<dbReference type="GO" id="GO:0009117">
    <property type="term" value="P:nucleotide metabolic process"/>
    <property type="evidence" value="ECO:0007669"/>
    <property type="project" value="UniProtKB-KW"/>
</dbReference>
<dbReference type="CDD" id="cd00555">
    <property type="entry name" value="Maf"/>
    <property type="match status" value="1"/>
</dbReference>
<dbReference type="FunFam" id="3.90.950.10:FF:000004">
    <property type="entry name" value="dTTP/UTP pyrophosphatase"/>
    <property type="match status" value="1"/>
</dbReference>
<dbReference type="Gene3D" id="3.90.950.10">
    <property type="match status" value="1"/>
</dbReference>
<dbReference type="HAMAP" id="MF_00528">
    <property type="entry name" value="Maf"/>
    <property type="match status" value="1"/>
</dbReference>
<dbReference type="InterPro" id="IPR029001">
    <property type="entry name" value="ITPase-like_fam"/>
</dbReference>
<dbReference type="InterPro" id="IPR003697">
    <property type="entry name" value="Maf-like"/>
</dbReference>
<dbReference type="NCBIfam" id="TIGR00172">
    <property type="entry name" value="maf"/>
    <property type="match status" value="1"/>
</dbReference>
<dbReference type="PANTHER" id="PTHR43213">
    <property type="entry name" value="BIFUNCTIONAL DTTP/UTP PYROPHOSPHATASE/METHYLTRANSFERASE PROTEIN-RELATED"/>
    <property type="match status" value="1"/>
</dbReference>
<dbReference type="PANTHER" id="PTHR43213:SF5">
    <property type="entry name" value="BIFUNCTIONAL DTTP_UTP PYROPHOSPHATASE_METHYLTRANSFERASE PROTEIN-RELATED"/>
    <property type="match status" value="1"/>
</dbReference>
<dbReference type="Pfam" id="PF02545">
    <property type="entry name" value="Maf"/>
    <property type="match status" value="1"/>
</dbReference>
<dbReference type="PIRSF" id="PIRSF006305">
    <property type="entry name" value="Maf"/>
    <property type="match status" value="1"/>
</dbReference>
<dbReference type="SUPFAM" id="SSF52972">
    <property type="entry name" value="ITPase-like"/>
    <property type="match status" value="1"/>
</dbReference>
<reference key="1">
    <citation type="journal article" date="2001" name="Nature">
        <title>Genome sequence of enterohaemorrhagic Escherichia coli O157:H7.</title>
        <authorList>
            <person name="Perna N.T."/>
            <person name="Plunkett G. III"/>
            <person name="Burland V."/>
            <person name="Mau B."/>
            <person name="Glasner J.D."/>
            <person name="Rose D.J."/>
            <person name="Mayhew G.F."/>
            <person name="Evans P.S."/>
            <person name="Gregor J."/>
            <person name="Kirkpatrick H.A."/>
            <person name="Posfai G."/>
            <person name="Hackett J."/>
            <person name="Klink S."/>
            <person name="Boutin A."/>
            <person name="Shao Y."/>
            <person name="Miller L."/>
            <person name="Grotbeck E.J."/>
            <person name="Davis N.W."/>
            <person name="Lim A."/>
            <person name="Dimalanta E.T."/>
            <person name="Potamousis K."/>
            <person name="Apodaca J."/>
            <person name="Anantharaman T.S."/>
            <person name="Lin J."/>
            <person name="Yen G."/>
            <person name="Schwartz D.C."/>
            <person name="Welch R.A."/>
            <person name="Blattner F.R."/>
        </authorList>
    </citation>
    <scope>NUCLEOTIDE SEQUENCE [LARGE SCALE GENOMIC DNA]</scope>
    <source>
        <strain>O157:H7 / EDL933 / ATCC 700927 / EHEC</strain>
    </source>
</reference>
<reference key="2">
    <citation type="journal article" date="2001" name="DNA Res.">
        <title>Complete genome sequence of enterohemorrhagic Escherichia coli O157:H7 and genomic comparison with a laboratory strain K-12.</title>
        <authorList>
            <person name="Hayashi T."/>
            <person name="Makino K."/>
            <person name="Ohnishi M."/>
            <person name="Kurokawa K."/>
            <person name="Ishii K."/>
            <person name="Yokoyama K."/>
            <person name="Han C.-G."/>
            <person name="Ohtsubo E."/>
            <person name="Nakayama K."/>
            <person name="Murata T."/>
            <person name="Tanaka M."/>
            <person name="Tobe T."/>
            <person name="Iida T."/>
            <person name="Takami H."/>
            <person name="Honda T."/>
            <person name="Sasakawa C."/>
            <person name="Ogasawara N."/>
            <person name="Yasunaga T."/>
            <person name="Kuhara S."/>
            <person name="Shiba T."/>
            <person name="Hattori M."/>
            <person name="Shinagawa H."/>
        </authorList>
    </citation>
    <scope>NUCLEOTIDE SEQUENCE [LARGE SCALE GENOMIC DNA]</scope>
    <source>
        <strain>O157:H7 / Sakai / RIMD 0509952 / EHEC</strain>
    </source>
</reference>
<sequence>MTSLYLASGSPRRQELLAQLGVTFERIVTGIEEQRQPQESAQQYVVRLAREKARAGVAQTAKDLPVLGADTIVILNGEVLEKPRDAEHAAQMLRKLSGQTHQVMTAVALADSRHILDCLVVTDVTFRTLTDEDIAGYVASGEPLDKAGAYGIQGLGGCFVRKINGSYQAVVGLPLVETYELLSNFNALREKRDKHDG</sequence>
<name>NTPPA_ECO57</name>
<evidence type="ECO:0000255" key="1">
    <source>
        <dbReference type="HAMAP-Rule" id="MF_00528"/>
    </source>
</evidence>
<evidence type="ECO:0000305" key="2"/>
<keyword id="KW-0963">Cytoplasm</keyword>
<keyword id="KW-0378">Hydrolase</keyword>
<keyword id="KW-0546">Nucleotide metabolism</keyword>
<keyword id="KW-1185">Reference proteome</keyword>
<accession>P58629</accession>
<gene>
    <name type="primary">yhdE</name>
    <name type="ordered locus">Z4606</name>
    <name type="ordered locus">ECs4120</name>
</gene>
<protein>
    <recommendedName>
        <fullName evidence="1">dTTP/UTP pyrophosphatase</fullName>
        <shortName evidence="1">dTTPase/UTPase</shortName>
        <ecNumber evidence="1">3.6.1.9</ecNumber>
    </recommendedName>
    <alternativeName>
        <fullName evidence="1">Nucleoside triphosphate pyrophosphatase</fullName>
    </alternativeName>
    <alternativeName>
        <fullName evidence="1">Nucleotide pyrophosphatase</fullName>
        <shortName evidence="1">Nucleotide PPase</shortName>
    </alternativeName>
</protein>
<comment type="function">
    <text evidence="1">Nucleoside triphosphate pyrophosphatase that hydrolyzes dTTP and UTP. May have a dual role in cell division arrest and in preventing the incorporation of modified nucleotides into cellular nucleic acids.</text>
</comment>
<comment type="catalytic activity">
    <reaction evidence="1">
        <text>dTTP + H2O = dTMP + diphosphate + H(+)</text>
        <dbReference type="Rhea" id="RHEA:28534"/>
        <dbReference type="ChEBI" id="CHEBI:15377"/>
        <dbReference type="ChEBI" id="CHEBI:15378"/>
        <dbReference type="ChEBI" id="CHEBI:33019"/>
        <dbReference type="ChEBI" id="CHEBI:37568"/>
        <dbReference type="ChEBI" id="CHEBI:63528"/>
        <dbReference type="EC" id="3.6.1.9"/>
    </reaction>
</comment>
<comment type="catalytic activity">
    <reaction evidence="1">
        <text>UTP + H2O = UMP + diphosphate + H(+)</text>
        <dbReference type="Rhea" id="RHEA:29395"/>
        <dbReference type="ChEBI" id="CHEBI:15377"/>
        <dbReference type="ChEBI" id="CHEBI:15378"/>
        <dbReference type="ChEBI" id="CHEBI:33019"/>
        <dbReference type="ChEBI" id="CHEBI:46398"/>
        <dbReference type="ChEBI" id="CHEBI:57865"/>
        <dbReference type="EC" id="3.6.1.9"/>
    </reaction>
</comment>
<comment type="cofactor">
    <cofactor evidence="1">
        <name>a divalent metal cation</name>
        <dbReference type="ChEBI" id="CHEBI:60240"/>
    </cofactor>
</comment>
<comment type="subcellular location">
    <subcellularLocation>
        <location evidence="1 2">Cytoplasm</location>
    </subcellularLocation>
</comment>
<comment type="similarity">
    <text evidence="1">Belongs to the Maf family. YhdE subfamily.</text>
</comment>
<proteinExistence type="inferred from homology"/>